<accession>Q3L701</accession>
<evidence type="ECO:0000250" key="1"/>
<evidence type="ECO:0000250" key="2">
    <source>
        <dbReference type="UniProtKB" id="P00157"/>
    </source>
</evidence>
<evidence type="ECO:0000255" key="3">
    <source>
        <dbReference type="PROSITE-ProRule" id="PRU00967"/>
    </source>
</evidence>
<evidence type="ECO:0000255" key="4">
    <source>
        <dbReference type="PROSITE-ProRule" id="PRU00968"/>
    </source>
</evidence>
<organism>
    <name type="scientific">Puma concolor</name>
    <name type="common">Mountain lion</name>
    <name type="synonym">Felis concolor</name>
    <dbReference type="NCBI Taxonomy" id="9696"/>
    <lineage>
        <taxon>Eukaryota</taxon>
        <taxon>Metazoa</taxon>
        <taxon>Chordata</taxon>
        <taxon>Craniata</taxon>
        <taxon>Vertebrata</taxon>
        <taxon>Euteleostomi</taxon>
        <taxon>Mammalia</taxon>
        <taxon>Eutheria</taxon>
        <taxon>Laurasiatheria</taxon>
        <taxon>Carnivora</taxon>
        <taxon>Feliformia</taxon>
        <taxon>Felidae</taxon>
        <taxon>Felinae</taxon>
        <taxon>Puma</taxon>
    </lineage>
</organism>
<geneLocation type="mitochondrion"/>
<dbReference type="EMBL" id="AY598487">
    <property type="protein sequence ID" value="AAU00433.1"/>
    <property type="molecule type" value="Genomic_DNA"/>
</dbReference>
<dbReference type="RefSeq" id="YP_004940600.1">
    <property type="nucleotide sequence ID" value="NC_016470.1"/>
</dbReference>
<dbReference type="SMR" id="Q3L701"/>
<dbReference type="GeneID" id="11473376"/>
<dbReference type="KEGG" id="pcoo:11473376"/>
<dbReference type="CTD" id="4519"/>
<dbReference type="OrthoDB" id="15293at33554"/>
<dbReference type="Proteomes" id="UP000515131">
    <property type="component" value="Mitochondrion MT"/>
</dbReference>
<dbReference type="GO" id="GO:0005743">
    <property type="term" value="C:mitochondrial inner membrane"/>
    <property type="evidence" value="ECO:0007669"/>
    <property type="project" value="UniProtKB-SubCell"/>
</dbReference>
<dbReference type="GO" id="GO:0045275">
    <property type="term" value="C:respiratory chain complex III"/>
    <property type="evidence" value="ECO:0007669"/>
    <property type="project" value="InterPro"/>
</dbReference>
<dbReference type="GO" id="GO:0046872">
    <property type="term" value="F:metal ion binding"/>
    <property type="evidence" value="ECO:0007669"/>
    <property type="project" value="UniProtKB-KW"/>
</dbReference>
<dbReference type="GO" id="GO:0008121">
    <property type="term" value="F:ubiquinol-cytochrome-c reductase activity"/>
    <property type="evidence" value="ECO:0007669"/>
    <property type="project" value="InterPro"/>
</dbReference>
<dbReference type="GO" id="GO:0006122">
    <property type="term" value="P:mitochondrial electron transport, ubiquinol to cytochrome c"/>
    <property type="evidence" value="ECO:0007669"/>
    <property type="project" value="TreeGrafter"/>
</dbReference>
<dbReference type="CDD" id="cd00290">
    <property type="entry name" value="cytochrome_b_C"/>
    <property type="match status" value="1"/>
</dbReference>
<dbReference type="CDD" id="cd00284">
    <property type="entry name" value="Cytochrome_b_N"/>
    <property type="match status" value="1"/>
</dbReference>
<dbReference type="FunFam" id="1.20.810.10:FF:000002">
    <property type="entry name" value="Cytochrome b"/>
    <property type="match status" value="1"/>
</dbReference>
<dbReference type="Gene3D" id="1.20.810.10">
    <property type="entry name" value="Cytochrome Bc1 Complex, Chain C"/>
    <property type="match status" value="1"/>
</dbReference>
<dbReference type="InterPro" id="IPR005798">
    <property type="entry name" value="Cyt_b/b6_C"/>
</dbReference>
<dbReference type="InterPro" id="IPR036150">
    <property type="entry name" value="Cyt_b/b6_C_sf"/>
</dbReference>
<dbReference type="InterPro" id="IPR005797">
    <property type="entry name" value="Cyt_b/b6_N"/>
</dbReference>
<dbReference type="InterPro" id="IPR027387">
    <property type="entry name" value="Cytb/b6-like_sf"/>
</dbReference>
<dbReference type="InterPro" id="IPR030689">
    <property type="entry name" value="Cytochrome_b"/>
</dbReference>
<dbReference type="InterPro" id="IPR048260">
    <property type="entry name" value="Cytochrome_b_C_euk/bac"/>
</dbReference>
<dbReference type="InterPro" id="IPR048259">
    <property type="entry name" value="Cytochrome_b_N_euk/bac"/>
</dbReference>
<dbReference type="InterPro" id="IPR016174">
    <property type="entry name" value="Di-haem_cyt_TM"/>
</dbReference>
<dbReference type="PANTHER" id="PTHR19271">
    <property type="entry name" value="CYTOCHROME B"/>
    <property type="match status" value="1"/>
</dbReference>
<dbReference type="PANTHER" id="PTHR19271:SF16">
    <property type="entry name" value="CYTOCHROME B"/>
    <property type="match status" value="1"/>
</dbReference>
<dbReference type="Pfam" id="PF00032">
    <property type="entry name" value="Cytochrom_B_C"/>
    <property type="match status" value="1"/>
</dbReference>
<dbReference type="Pfam" id="PF00033">
    <property type="entry name" value="Cytochrome_B"/>
    <property type="match status" value="1"/>
</dbReference>
<dbReference type="PIRSF" id="PIRSF038885">
    <property type="entry name" value="COB"/>
    <property type="match status" value="1"/>
</dbReference>
<dbReference type="SUPFAM" id="SSF81648">
    <property type="entry name" value="a domain/subunit of cytochrome bc1 complex (Ubiquinol-cytochrome c reductase)"/>
    <property type="match status" value="1"/>
</dbReference>
<dbReference type="SUPFAM" id="SSF81342">
    <property type="entry name" value="Transmembrane di-heme cytochromes"/>
    <property type="match status" value="1"/>
</dbReference>
<dbReference type="PROSITE" id="PS51003">
    <property type="entry name" value="CYTB_CTER"/>
    <property type="match status" value="1"/>
</dbReference>
<dbReference type="PROSITE" id="PS51002">
    <property type="entry name" value="CYTB_NTER"/>
    <property type="match status" value="1"/>
</dbReference>
<name>CYB_PUMCO</name>
<sequence>MTNIRKSHPLIKIINHSFIDLPTPSNISAWWNFGSLLGVCLILQILTGLFLAMHYTSDTMTAFSSVTHICRDVNYGWIIRYMHANGASMFFICLYMHVGRGMYYGSYTFSETWNIGIMLLFAVMATAFMGYVLPWGQMSFWGATVITNLLSAIPYIGTNLVEWIWGGFSVDKATLTRFFAFHFILPFIISALAAVHLLFLHETGSNNPSGITSDSDKIPFHPYYTTKDILGLLALILTLMLLVLFLPDMLGDPDNYIPANPLNTPPHIKPEWYFLFAYAILRSIPNKLGGVLALVLSILILAMIPTLHTSKQRGMMFRPLSQCLFWLLVADLLTLTWIGGQPVEHPFITIGQLASVLYFSTLLILMPISGIIENRLLKW</sequence>
<proteinExistence type="inferred from homology"/>
<reference key="1">
    <citation type="journal article" date="2005" name="Mol. Phylogenet. Evol.">
        <title>A phylogeny of the Caniformia (order Carnivora) based on 12 complete protein-coding mitochondrial genes.</title>
        <authorList>
            <person name="Delisle I."/>
            <person name="Strobeck C."/>
        </authorList>
    </citation>
    <scope>NUCLEOTIDE SEQUENCE [GENOMIC DNA]</scope>
</reference>
<feature type="chain" id="PRO_0000247430" description="Cytochrome b">
    <location>
        <begin position="1"/>
        <end position="379"/>
    </location>
</feature>
<feature type="transmembrane region" description="Helical" evidence="2">
    <location>
        <begin position="33"/>
        <end position="53"/>
    </location>
</feature>
<feature type="transmembrane region" description="Helical" evidence="2">
    <location>
        <begin position="77"/>
        <end position="98"/>
    </location>
</feature>
<feature type="transmembrane region" description="Helical" evidence="2">
    <location>
        <begin position="113"/>
        <end position="133"/>
    </location>
</feature>
<feature type="transmembrane region" description="Helical" evidence="2">
    <location>
        <begin position="178"/>
        <end position="198"/>
    </location>
</feature>
<feature type="transmembrane region" description="Helical" evidence="2">
    <location>
        <begin position="226"/>
        <end position="246"/>
    </location>
</feature>
<feature type="transmembrane region" description="Helical" evidence="2">
    <location>
        <begin position="288"/>
        <end position="308"/>
    </location>
</feature>
<feature type="transmembrane region" description="Helical" evidence="2">
    <location>
        <begin position="320"/>
        <end position="340"/>
    </location>
</feature>
<feature type="transmembrane region" description="Helical" evidence="2">
    <location>
        <begin position="347"/>
        <end position="367"/>
    </location>
</feature>
<feature type="binding site" description="axial binding residue" evidence="2">
    <location>
        <position position="83"/>
    </location>
    <ligand>
        <name>heme b</name>
        <dbReference type="ChEBI" id="CHEBI:60344"/>
        <label>b562</label>
    </ligand>
    <ligandPart>
        <name>Fe</name>
        <dbReference type="ChEBI" id="CHEBI:18248"/>
    </ligandPart>
</feature>
<feature type="binding site" description="axial binding residue" evidence="2">
    <location>
        <position position="97"/>
    </location>
    <ligand>
        <name>heme b</name>
        <dbReference type="ChEBI" id="CHEBI:60344"/>
        <label>b566</label>
    </ligand>
    <ligandPart>
        <name>Fe</name>
        <dbReference type="ChEBI" id="CHEBI:18248"/>
    </ligandPart>
</feature>
<feature type="binding site" description="axial binding residue" evidence="2">
    <location>
        <position position="182"/>
    </location>
    <ligand>
        <name>heme b</name>
        <dbReference type="ChEBI" id="CHEBI:60344"/>
        <label>b562</label>
    </ligand>
    <ligandPart>
        <name>Fe</name>
        <dbReference type="ChEBI" id="CHEBI:18248"/>
    </ligandPart>
</feature>
<feature type="binding site" description="axial binding residue" evidence="2">
    <location>
        <position position="196"/>
    </location>
    <ligand>
        <name>heme b</name>
        <dbReference type="ChEBI" id="CHEBI:60344"/>
        <label>b566</label>
    </ligand>
    <ligandPart>
        <name>Fe</name>
        <dbReference type="ChEBI" id="CHEBI:18248"/>
    </ligandPart>
</feature>
<feature type="binding site" evidence="2">
    <location>
        <position position="201"/>
    </location>
    <ligand>
        <name>a ubiquinone</name>
        <dbReference type="ChEBI" id="CHEBI:16389"/>
    </ligand>
</feature>
<keyword id="KW-0249">Electron transport</keyword>
<keyword id="KW-0349">Heme</keyword>
<keyword id="KW-0408">Iron</keyword>
<keyword id="KW-0472">Membrane</keyword>
<keyword id="KW-0479">Metal-binding</keyword>
<keyword id="KW-0496">Mitochondrion</keyword>
<keyword id="KW-0999">Mitochondrion inner membrane</keyword>
<keyword id="KW-1185">Reference proteome</keyword>
<keyword id="KW-0679">Respiratory chain</keyword>
<keyword id="KW-0812">Transmembrane</keyword>
<keyword id="KW-1133">Transmembrane helix</keyword>
<keyword id="KW-0813">Transport</keyword>
<keyword id="KW-0830">Ubiquinone</keyword>
<protein>
    <recommendedName>
        <fullName>Cytochrome b</fullName>
    </recommendedName>
    <alternativeName>
        <fullName>Complex III subunit 3</fullName>
    </alternativeName>
    <alternativeName>
        <fullName>Complex III subunit III</fullName>
    </alternativeName>
    <alternativeName>
        <fullName>Cytochrome b-c1 complex subunit 3</fullName>
    </alternativeName>
    <alternativeName>
        <fullName>Ubiquinol-cytochrome-c reductase complex cytochrome b subunit</fullName>
    </alternativeName>
</protein>
<comment type="function">
    <text evidence="2">Component of the ubiquinol-cytochrome c reductase complex (complex III or cytochrome b-c1 complex) that is part of the mitochondrial respiratory chain. The b-c1 complex mediates electron transfer from ubiquinol to cytochrome c. Contributes to the generation of a proton gradient across the mitochondrial membrane that is then used for ATP synthesis.</text>
</comment>
<comment type="cofactor">
    <cofactor evidence="2">
        <name>heme b</name>
        <dbReference type="ChEBI" id="CHEBI:60344"/>
    </cofactor>
    <text evidence="2">Binds 2 heme b groups non-covalently.</text>
</comment>
<comment type="subunit">
    <text evidence="2">The cytochrome bc1 complex contains 11 subunits: 3 respiratory subunits (MT-CYB, CYC1 and UQCRFS1), 2 core proteins (UQCRC1 and UQCRC2) and 6 low-molecular weight proteins (UQCRH/QCR6, UQCRB/QCR7, UQCRQ/QCR8, UQCR10/QCR9, UQCR11/QCR10 and a cleavage product of UQCRFS1). This cytochrome bc1 complex then forms a dimer.</text>
</comment>
<comment type="subcellular location">
    <subcellularLocation>
        <location evidence="2">Mitochondrion inner membrane</location>
        <topology evidence="2">Multi-pass membrane protein</topology>
    </subcellularLocation>
</comment>
<comment type="miscellaneous">
    <text evidence="1">Heme 1 (or BL or b562) is low-potential and absorbs at about 562 nm, and heme 2 (or BH or b566) is high-potential and absorbs at about 566 nm.</text>
</comment>
<comment type="similarity">
    <text evidence="3 4">Belongs to the cytochrome b family.</text>
</comment>
<comment type="caution">
    <text evidence="2">The full-length protein contains only eight transmembrane helices, not nine as predicted by bioinformatics tools.</text>
</comment>
<gene>
    <name type="primary">MT-CYB</name>
    <name type="synonym">COB</name>
    <name type="synonym">CYTB</name>
    <name type="synonym">MTCYB</name>
</gene>